<sequence>MNKTEFIAYMTEHCHNNKHAAHKTLTKADAEKALNLVIDSVISAIKSKHNVNLTGFGSFEIHHRKAREGRNPKTGAKMTIDAYNQPTFRAGRKLKEACN</sequence>
<organism>
    <name type="scientific">Rickettsia typhi (strain ATCC VR-144 / Wilmington)</name>
    <dbReference type="NCBI Taxonomy" id="257363"/>
    <lineage>
        <taxon>Bacteria</taxon>
        <taxon>Pseudomonadati</taxon>
        <taxon>Pseudomonadota</taxon>
        <taxon>Alphaproteobacteria</taxon>
        <taxon>Rickettsiales</taxon>
        <taxon>Rickettsiaceae</taxon>
        <taxon>Rickettsieae</taxon>
        <taxon>Rickettsia</taxon>
        <taxon>typhus group</taxon>
    </lineage>
</organism>
<dbReference type="EMBL" id="AE017197">
    <property type="protein sequence ID" value="AAU03646.1"/>
    <property type="molecule type" value="Genomic_DNA"/>
</dbReference>
<dbReference type="SMR" id="Q68XJ6"/>
<dbReference type="KEGG" id="rty:RT0162"/>
<dbReference type="eggNOG" id="COG0776">
    <property type="taxonomic scope" value="Bacteria"/>
</dbReference>
<dbReference type="HOGENOM" id="CLU_105066_3_1_5"/>
<dbReference type="Proteomes" id="UP000000604">
    <property type="component" value="Chromosome"/>
</dbReference>
<dbReference type="GO" id="GO:0003677">
    <property type="term" value="F:DNA binding"/>
    <property type="evidence" value="ECO:0007669"/>
    <property type="project" value="UniProtKB-KW"/>
</dbReference>
<dbReference type="GO" id="GO:0030527">
    <property type="term" value="F:structural constituent of chromatin"/>
    <property type="evidence" value="ECO:0007669"/>
    <property type="project" value="InterPro"/>
</dbReference>
<dbReference type="GO" id="GO:0030261">
    <property type="term" value="P:chromosome condensation"/>
    <property type="evidence" value="ECO:0007669"/>
    <property type="project" value="UniProtKB-KW"/>
</dbReference>
<dbReference type="CDD" id="cd13831">
    <property type="entry name" value="HU"/>
    <property type="match status" value="1"/>
</dbReference>
<dbReference type="Gene3D" id="4.10.520.10">
    <property type="entry name" value="IHF-like DNA-binding proteins"/>
    <property type="match status" value="1"/>
</dbReference>
<dbReference type="InterPro" id="IPR000119">
    <property type="entry name" value="Hist_DNA-bd"/>
</dbReference>
<dbReference type="InterPro" id="IPR020816">
    <property type="entry name" value="Histone-like_DNA-bd_CS"/>
</dbReference>
<dbReference type="InterPro" id="IPR010992">
    <property type="entry name" value="IHF-like_DNA-bd_dom_sf"/>
</dbReference>
<dbReference type="PANTHER" id="PTHR33175">
    <property type="entry name" value="DNA-BINDING PROTEIN HU"/>
    <property type="match status" value="1"/>
</dbReference>
<dbReference type="PANTHER" id="PTHR33175:SF3">
    <property type="entry name" value="DNA-BINDING PROTEIN HU-BETA"/>
    <property type="match status" value="1"/>
</dbReference>
<dbReference type="Pfam" id="PF00216">
    <property type="entry name" value="Bac_DNA_binding"/>
    <property type="match status" value="1"/>
</dbReference>
<dbReference type="PRINTS" id="PR01727">
    <property type="entry name" value="DNABINDINGHU"/>
</dbReference>
<dbReference type="SMART" id="SM00411">
    <property type="entry name" value="BHL"/>
    <property type="match status" value="1"/>
</dbReference>
<dbReference type="SUPFAM" id="SSF47729">
    <property type="entry name" value="IHF-like DNA-binding proteins"/>
    <property type="match status" value="1"/>
</dbReference>
<dbReference type="PROSITE" id="PS00045">
    <property type="entry name" value="HISTONE_LIKE"/>
    <property type="match status" value="1"/>
</dbReference>
<accession>Q68XJ6</accession>
<name>DBH_RICTY</name>
<feature type="chain" id="PRO_0000273734" description="DNA-binding protein HU">
    <location>
        <begin position="1"/>
        <end position="99"/>
    </location>
</feature>
<reference key="1">
    <citation type="journal article" date="2004" name="J. Bacteriol.">
        <title>Complete genome sequence of Rickettsia typhi and comparison with sequences of other Rickettsiae.</title>
        <authorList>
            <person name="McLeod M.P."/>
            <person name="Qin X."/>
            <person name="Karpathy S.E."/>
            <person name="Gioia J."/>
            <person name="Highlander S.K."/>
            <person name="Fox G.E."/>
            <person name="McNeill T.Z."/>
            <person name="Jiang H."/>
            <person name="Muzny D."/>
            <person name="Jacob L.S."/>
            <person name="Hawes A.C."/>
            <person name="Sodergren E."/>
            <person name="Gill R."/>
            <person name="Hume J."/>
            <person name="Morgan M."/>
            <person name="Fan G."/>
            <person name="Amin A.G."/>
            <person name="Gibbs R.A."/>
            <person name="Hong C."/>
            <person name="Yu X.-J."/>
            <person name="Walker D.H."/>
            <person name="Weinstock G.M."/>
        </authorList>
    </citation>
    <scope>NUCLEOTIDE SEQUENCE [LARGE SCALE GENOMIC DNA]</scope>
    <source>
        <strain>ATCC VR-144 / Wilmington</strain>
    </source>
</reference>
<gene>
    <name type="primary">hup</name>
    <name type="synonym">hupA</name>
    <name type="ordered locus">RT0162</name>
</gene>
<protein>
    <recommendedName>
        <fullName>DNA-binding protein HU</fullName>
    </recommendedName>
</protein>
<comment type="function">
    <text evidence="1">Histone-like DNA-binding protein which is capable of wrapping DNA to stabilize it, and thus to prevent its denaturation under extreme environmental conditions.</text>
</comment>
<comment type="subunit">
    <text evidence="1">Homodimer.</text>
</comment>
<comment type="similarity">
    <text evidence="2">Belongs to the bacterial histone-like protein family.</text>
</comment>
<proteinExistence type="inferred from homology"/>
<keyword id="KW-0226">DNA condensation</keyword>
<keyword id="KW-0238">DNA-binding</keyword>
<evidence type="ECO:0000250" key="1"/>
<evidence type="ECO:0000305" key="2"/>